<reference key="1">
    <citation type="journal article" date="1974" name="Biochim. Biophys. Acta">
        <title>Amino acid sequence of sheep carbonic anhydrase C.</title>
        <authorList>
            <person name="Tanis R.J."/>
            <person name="Ferrell R.E."/>
            <person name="Tashian R.E."/>
        </authorList>
    </citation>
    <scope>PROTEIN SEQUENCE OF 2-260</scope>
    <scope>ACETYLATION AT SER-2</scope>
</reference>
<reference key="2">
    <citation type="journal article" date="1979" name="Biochim. Biophys. Acta">
        <title>Multiple molecular forms of erythrocyte carbonic anhydrase of sheep.</title>
        <authorList>
            <person name="Mallet B."/>
            <person name="Gulian J.M."/>
            <person name="Sciaky M."/>
            <person name="Laurent G."/>
            <person name="Charrel M."/>
        </authorList>
    </citation>
    <scope>VARIANT THR-36</scope>
</reference>
<feature type="initiator methionine" description="Removed" evidence="6">
    <location>
        <position position="1"/>
    </location>
</feature>
<feature type="chain" id="PRO_0000077422" description="Carbonic anhydrase 2">
    <location>
        <begin position="2"/>
        <end position="260"/>
    </location>
</feature>
<feature type="domain" description="Alpha-carbonic anhydrase" evidence="4">
    <location>
        <begin position="3"/>
        <end position="259"/>
    </location>
</feature>
<feature type="active site" description="Proton donor/acceptor" evidence="1">
    <location>
        <position position="64"/>
    </location>
</feature>
<feature type="binding site" evidence="1">
    <location>
        <position position="94"/>
    </location>
    <ligand>
        <name>Zn(2+)</name>
        <dbReference type="ChEBI" id="CHEBI:29105"/>
        <note>catalytic</note>
    </ligand>
</feature>
<feature type="binding site" evidence="1">
    <location>
        <position position="96"/>
    </location>
    <ligand>
        <name>Zn(2+)</name>
        <dbReference type="ChEBI" id="CHEBI:29105"/>
        <note>catalytic</note>
    </ligand>
</feature>
<feature type="binding site" evidence="1">
    <location>
        <position position="119"/>
    </location>
    <ligand>
        <name>Zn(2+)</name>
        <dbReference type="ChEBI" id="CHEBI:29105"/>
        <note>catalytic</note>
    </ligand>
</feature>
<feature type="binding site" evidence="1">
    <location>
        <begin position="198"/>
        <end position="199"/>
    </location>
    <ligand>
        <name>substrate</name>
    </ligand>
</feature>
<feature type="site" description="Fine-tunes the proton-transfer properties of H-64" evidence="1">
    <location>
        <position position="7"/>
    </location>
</feature>
<feature type="site" description="Fine-tunes the proton-transfer properties of H-64" evidence="1">
    <location>
        <position position="62"/>
    </location>
</feature>
<feature type="site" description="Fine-tunes the proton-transfer properties of H-64" evidence="1">
    <location>
        <position position="67"/>
    </location>
</feature>
<feature type="modified residue" description="N-acetylserine" evidence="5 6">
    <location>
        <position position="2"/>
    </location>
</feature>
<feature type="modified residue" description="Phosphoserine" evidence="3">
    <location>
        <position position="2"/>
    </location>
</feature>
<feature type="modified residue" description="Phosphoserine" evidence="1">
    <location>
        <position position="165"/>
    </location>
</feature>
<feature type="modified residue" description="Phosphoserine" evidence="1">
    <location>
        <position position="172"/>
    </location>
</feature>
<feature type="sequence variant" description="In one of the major forms." evidence="5">
    <original>K</original>
    <variation>T</variation>
    <location>
        <position position="36"/>
    </location>
</feature>
<evidence type="ECO:0000250" key="1">
    <source>
        <dbReference type="UniProtKB" id="P00918"/>
    </source>
</evidence>
<evidence type="ECO:0000250" key="2">
    <source>
        <dbReference type="UniProtKB" id="P00921"/>
    </source>
</evidence>
<evidence type="ECO:0000250" key="3">
    <source>
        <dbReference type="UniProtKB" id="P27139"/>
    </source>
</evidence>
<evidence type="ECO:0000255" key="4">
    <source>
        <dbReference type="PROSITE-ProRule" id="PRU01134"/>
    </source>
</evidence>
<evidence type="ECO:0000269" key="5">
    <source>
    </source>
</evidence>
<evidence type="ECO:0000269" key="6">
    <source>
    </source>
</evidence>
<evidence type="ECO:0000305" key="7"/>
<comment type="function">
    <text evidence="1">Catalyzes the reversible hydration of carbon dioxide. Can also hydrate cyanamide to urea. Involved in the regulation of fluid secretion into the anterior chamber of the eye. Essential for bone resorption and osteoclast differentiation. Contributes to intracellular pH regulation in the duodenal upper villous epithelium during proton-coupled peptide absorption. Stimulates the chloride-bicarbonate exchange activity of SLC26A6.</text>
</comment>
<comment type="catalytic activity">
    <reaction evidence="1">
        <text>hydrogencarbonate + H(+) = CO2 + H2O</text>
        <dbReference type="Rhea" id="RHEA:10748"/>
        <dbReference type="ChEBI" id="CHEBI:15377"/>
        <dbReference type="ChEBI" id="CHEBI:15378"/>
        <dbReference type="ChEBI" id="CHEBI:16526"/>
        <dbReference type="ChEBI" id="CHEBI:17544"/>
        <dbReference type="EC" id="4.2.1.1"/>
    </reaction>
</comment>
<comment type="catalytic activity">
    <reaction evidence="1">
        <text>urea = cyanamide + H2O</text>
        <dbReference type="Rhea" id="RHEA:23056"/>
        <dbReference type="ChEBI" id="CHEBI:15377"/>
        <dbReference type="ChEBI" id="CHEBI:16199"/>
        <dbReference type="ChEBI" id="CHEBI:16698"/>
        <dbReference type="EC" id="4.2.1.69"/>
    </reaction>
</comment>
<comment type="cofactor">
    <cofactor evidence="2">
        <name>Zn(2+)</name>
        <dbReference type="ChEBI" id="CHEBI:29105"/>
    </cofactor>
</comment>
<comment type="activity regulation">
    <text evidence="1">Inhibited by acetazolamide.</text>
</comment>
<comment type="subunit">
    <text evidence="1">Interacts with SLC4A4 and SLC26A6. Interaction with SLC4A7 regulates SLC4A7 transporter activity (By similarity).</text>
</comment>
<comment type="subcellular location">
    <subcellularLocation>
        <location evidence="1">Cytoplasm</location>
    </subcellularLocation>
    <subcellularLocation>
        <location evidence="1">Cell membrane</location>
    </subcellularLocation>
    <text evidence="1">Colocalized with SLC26A6 at the surface of the cell membrane in order to form a bicarbonate transport metabolon. Displaced from the cytosolic surface of the cell membrane by PKC in phorbol myristate acetate (PMA)-induced cells (By similarity).</text>
</comment>
<comment type="miscellaneous">
    <text>One minor and three major forms were isolated chromatographically.</text>
</comment>
<comment type="similarity">
    <text evidence="7">Belongs to the alpha-carbonic anhydrase family.</text>
</comment>
<sequence>MSHHWGYGEHNGPEHWHKDFPIADGERQSPVDIDTKAVVPDPALKPLALLYEQAASRRMVNNGHSFNVEFDDSQDKAVLKDGPLTGTYRLVQFHFHWGSSDDQGSEHTVDRKKYAAELHLVHWNTKYGDFGTAAQQPDGLAVVGVFLKVGDANPALQKVLDVLDSIKTKGKSADFPNFDPSSLLKRALNYWTYPGSLTNPPLLESVTWVVLKEPTSVSSQQMLKFRSLNFNAEGEPELLMLANWRPAQPLKNRQVRVFPK</sequence>
<name>CAH2_SHEEP</name>
<accession>P00922</accession>
<organism>
    <name type="scientific">Ovis aries</name>
    <name type="common">Sheep</name>
    <dbReference type="NCBI Taxonomy" id="9940"/>
    <lineage>
        <taxon>Eukaryota</taxon>
        <taxon>Metazoa</taxon>
        <taxon>Chordata</taxon>
        <taxon>Craniata</taxon>
        <taxon>Vertebrata</taxon>
        <taxon>Euteleostomi</taxon>
        <taxon>Mammalia</taxon>
        <taxon>Eutheria</taxon>
        <taxon>Laurasiatheria</taxon>
        <taxon>Artiodactyla</taxon>
        <taxon>Ruminantia</taxon>
        <taxon>Pecora</taxon>
        <taxon>Bovidae</taxon>
        <taxon>Caprinae</taxon>
        <taxon>Ovis</taxon>
    </lineage>
</organism>
<gene>
    <name type="primary">CA2</name>
</gene>
<keyword id="KW-0007">Acetylation</keyword>
<keyword id="KW-1003">Cell membrane</keyword>
<keyword id="KW-0963">Cytoplasm</keyword>
<keyword id="KW-0903">Direct protein sequencing</keyword>
<keyword id="KW-0456">Lyase</keyword>
<keyword id="KW-0472">Membrane</keyword>
<keyword id="KW-0479">Metal-binding</keyword>
<keyword id="KW-0597">Phosphoprotein</keyword>
<keyword id="KW-1185">Reference proteome</keyword>
<keyword id="KW-0862">Zinc</keyword>
<dbReference type="EC" id="4.2.1.1" evidence="1"/>
<dbReference type="EC" id="4.2.1.69" evidence="1"/>
<dbReference type="PIR" id="A01145">
    <property type="entry name" value="CRSH2"/>
</dbReference>
<dbReference type="SMR" id="P00922"/>
<dbReference type="STRING" id="9940.ENSOARP00000013878"/>
<dbReference type="iPTMnet" id="P00922"/>
<dbReference type="PaxDb" id="9940-ENSOARP00000013878"/>
<dbReference type="eggNOG" id="KOG0382">
    <property type="taxonomic scope" value="Eukaryota"/>
</dbReference>
<dbReference type="Proteomes" id="UP000002356">
    <property type="component" value="Unplaced"/>
</dbReference>
<dbReference type="GO" id="GO:0045177">
    <property type="term" value="C:apical part of cell"/>
    <property type="evidence" value="ECO:0007669"/>
    <property type="project" value="TreeGrafter"/>
</dbReference>
<dbReference type="GO" id="GO:0005737">
    <property type="term" value="C:cytoplasm"/>
    <property type="evidence" value="ECO:0000250"/>
    <property type="project" value="UniProtKB"/>
</dbReference>
<dbReference type="GO" id="GO:0005886">
    <property type="term" value="C:plasma membrane"/>
    <property type="evidence" value="ECO:0000250"/>
    <property type="project" value="UniProtKB"/>
</dbReference>
<dbReference type="GO" id="GO:0004089">
    <property type="term" value="F:carbonate dehydratase activity"/>
    <property type="evidence" value="ECO:0007669"/>
    <property type="project" value="UniProtKB-EC"/>
</dbReference>
<dbReference type="GO" id="GO:0018820">
    <property type="term" value="F:cyanamide hydratase activity"/>
    <property type="evidence" value="ECO:0007669"/>
    <property type="project" value="RHEA"/>
</dbReference>
<dbReference type="GO" id="GO:0008270">
    <property type="term" value="F:zinc ion binding"/>
    <property type="evidence" value="ECO:0007669"/>
    <property type="project" value="InterPro"/>
</dbReference>
<dbReference type="GO" id="GO:0038166">
    <property type="term" value="P:angiotensin-activated signaling pathway"/>
    <property type="evidence" value="ECO:0000250"/>
    <property type="project" value="UniProtKB"/>
</dbReference>
<dbReference type="GO" id="GO:0015670">
    <property type="term" value="P:carbon dioxide transport"/>
    <property type="evidence" value="ECO:0007669"/>
    <property type="project" value="TreeGrafter"/>
</dbReference>
<dbReference type="GO" id="GO:2001150">
    <property type="term" value="P:positive regulation of dipeptide transmembrane transport"/>
    <property type="evidence" value="ECO:0000250"/>
    <property type="project" value="UniProtKB"/>
</dbReference>
<dbReference type="GO" id="GO:0051453">
    <property type="term" value="P:regulation of intracellular pH"/>
    <property type="evidence" value="ECO:0000250"/>
    <property type="project" value="UniProtKB"/>
</dbReference>
<dbReference type="GO" id="GO:0044070">
    <property type="term" value="P:regulation of monoatomic anion transport"/>
    <property type="evidence" value="ECO:0000250"/>
    <property type="project" value="UniProtKB"/>
</dbReference>
<dbReference type="FunFam" id="3.10.200.10:FF:000001">
    <property type="entry name" value="Carbonic anhydrase 2"/>
    <property type="match status" value="1"/>
</dbReference>
<dbReference type="Gene3D" id="3.10.200.10">
    <property type="entry name" value="Alpha carbonic anhydrase"/>
    <property type="match status" value="1"/>
</dbReference>
<dbReference type="InterPro" id="IPR001148">
    <property type="entry name" value="CA_dom"/>
</dbReference>
<dbReference type="InterPro" id="IPR036398">
    <property type="entry name" value="CA_dom_sf"/>
</dbReference>
<dbReference type="InterPro" id="IPR023561">
    <property type="entry name" value="Carbonic_anhydrase_a-class"/>
</dbReference>
<dbReference type="InterPro" id="IPR018338">
    <property type="entry name" value="Carbonic_anhydrase_a-class_CS"/>
</dbReference>
<dbReference type="PANTHER" id="PTHR18952">
    <property type="entry name" value="CARBONIC ANHYDRASE"/>
    <property type="match status" value="1"/>
</dbReference>
<dbReference type="PANTHER" id="PTHR18952:SF120">
    <property type="entry name" value="CARBONIC ANHYDRASE 2"/>
    <property type="match status" value="1"/>
</dbReference>
<dbReference type="Pfam" id="PF00194">
    <property type="entry name" value="Carb_anhydrase"/>
    <property type="match status" value="1"/>
</dbReference>
<dbReference type="SMART" id="SM01057">
    <property type="entry name" value="Carb_anhydrase"/>
    <property type="match status" value="1"/>
</dbReference>
<dbReference type="SUPFAM" id="SSF51069">
    <property type="entry name" value="Carbonic anhydrase"/>
    <property type="match status" value="1"/>
</dbReference>
<dbReference type="PROSITE" id="PS00162">
    <property type="entry name" value="ALPHA_CA_1"/>
    <property type="match status" value="1"/>
</dbReference>
<dbReference type="PROSITE" id="PS51144">
    <property type="entry name" value="ALPHA_CA_2"/>
    <property type="match status" value="1"/>
</dbReference>
<proteinExistence type="evidence at protein level"/>
<protein>
    <recommendedName>
        <fullName>Carbonic anhydrase 2</fullName>
        <ecNumber evidence="1">4.2.1.1</ecNumber>
    </recommendedName>
    <alternativeName>
        <fullName>Carbonate dehydratase II</fullName>
    </alternativeName>
    <alternativeName>
        <fullName>Carbonic anhydrase II</fullName>
        <shortName>CA-II</shortName>
    </alternativeName>
    <alternativeName>
        <fullName>Cyanamide hydratase CA2</fullName>
        <ecNumber evidence="1">4.2.1.69</ecNumber>
    </alternativeName>
</protein>